<gene>
    <name type="primary">slc22a15b</name>
    <name type="ORF">TGas054i12.1</name>
</gene>
<accession>Q28ES4</accession>
<name>S22FL_XENTR</name>
<reference key="1">
    <citation type="submission" date="2006-10" db="EMBL/GenBank/DDBJ databases">
        <authorList>
            <consortium name="Sanger Xenopus tropicalis EST/cDNA project"/>
        </authorList>
    </citation>
    <scope>NUCLEOTIDE SEQUENCE [LARGE SCALE MRNA]</scope>
    <source>
        <tissue>Gastrula</tissue>
    </source>
</reference>
<keyword id="KW-0325">Glycoprotein</keyword>
<keyword id="KW-0406">Ion transport</keyword>
<keyword id="KW-0472">Membrane</keyword>
<keyword id="KW-1185">Reference proteome</keyword>
<keyword id="KW-0812">Transmembrane</keyword>
<keyword id="KW-1133">Transmembrane helix</keyword>
<keyword id="KW-0813">Transport</keyword>
<protein>
    <recommendedName>
        <fullName>Solute carrier family 22 member 15-like</fullName>
    </recommendedName>
</protein>
<feature type="chain" id="PRO_0000338624" description="Solute carrier family 22 member 15-like">
    <location>
        <begin position="1"/>
        <end position="487"/>
    </location>
</feature>
<feature type="transmembrane region" description="Helical" evidence="2">
    <location>
        <begin position="22"/>
        <end position="42"/>
    </location>
</feature>
<feature type="transmembrane region" description="Helical" evidence="2">
    <location>
        <begin position="90"/>
        <end position="110"/>
    </location>
</feature>
<feature type="transmembrane region" description="Helical" evidence="2">
    <location>
        <begin position="117"/>
        <end position="137"/>
    </location>
</feature>
<feature type="transmembrane region" description="Helical" evidence="2">
    <location>
        <begin position="141"/>
        <end position="161"/>
    </location>
</feature>
<feature type="transmembrane region" description="Helical" evidence="2">
    <location>
        <begin position="178"/>
        <end position="198"/>
    </location>
</feature>
<feature type="transmembrane region" description="Helical" evidence="2">
    <location>
        <begin position="203"/>
        <end position="223"/>
    </location>
</feature>
<feature type="transmembrane region" description="Helical" evidence="2">
    <location>
        <begin position="286"/>
        <end position="306"/>
    </location>
</feature>
<feature type="transmembrane region" description="Helical" evidence="2">
    <location>
        <begin position="315"/>
        <end position="335"/>
    </location>
</feature>
<feature type="transmembrane region" description="Helical" evidence="2">
    <location>
        <begin position="345"/>
        <end position="365"/>
    </location>
</feature>
<feature type="transmembrane region" description="Helical" evidence="2">
    <location>
        <begin position="374"/>
        <end position="394"/>
    </location>
</feature>
<feature type="transmembrane region" description="Helical" evidence="2">
    <location>
        <begin position="406"/>
        <end position="426"/>
    </location>
</feature>
<feature type="transmembrane region" description="Helical" evidence="2">
    <location>
        <begin position="435"/>
        <end position="455"/>
    </location>
</feature>
<feature type="glycosylation site" description="N-linked (GlcNAc...) asparagine" evidence="2">
    <location>
        <position position="70"/>
    </location>
</feature>
<evidence type="ECO:0000250" key="1"/>
<evidence type="ECO:0000255" key="2"/>
<evidence type="ECO:0000305" key="3"/>
<comment type="function">
    <text evidence="1">Probably transports organic cations.</text>
</comment>
<comment type="subcellular location">
    <subcellularLocation>
        <location evidence="3">Membrane</location>
        <topology evidence="3">Multi-pass membrane protein</topology>
    </subcellularLocation>
</comment>
<comment type="similarity">
    <text evidence="3">Belongs to the major facilitator (TC 2.A.1) superfamily. Organic cation transporter (TC 2.A.1.19) family.</text>
</comment>
<sequence length="487" mass="53644">MDLDEAFLYIGEFGCCQKRLTAFLTLLQVYVACQSMLIVLVGAVPEYLIDNEDISASKEEYTKHLHDTNNFTSIVSEWHLIKNEAYKVNLASSLFFAGLLIGNILFGPLSDKLGRRPVYLSGLFFDITFGYCTALAPSYEVFAVSRFFVGIMNGGMALVSFVLTQEYVGKSYWALTGSLTNLIFAVGIAFYALLGFYIRNWRTLAFVANSPGIFFFLLSFLLPESPRWLYSHGYTTEAEGVLQSMAVGNGVERPVVKLKSCPGTSSKSAHSVFDLVKYGVLRWRTILLMYIWYVCSLVYYGLTLNAGELKGNLYLNVALYGLVEVPAFPLCLYFIEKSWSGRRKATAGFLGFAGFACIFTIFLPETNGDLLNPTVLALFGKLSVSAAFNVVYIYTSELYPTVVRNAGLGVCAMACRFGGILSPFIPTMKSLNPSMPFVAFGISGISAGILSLLLPETRNKPIAESIEDLQSPAYQLLSRGNEVLAST</sequence>
<organism>
    <name type="scientific">Xenopus tropicalis</name>
    <name type="common">Western clawed frog</name>
    <name type="synonym">Silurana tropicalis</name>
    <dbReference type="NCBI Taxonomy" id="8364"/>
    <lineage>
        <taxon>Eukaryota</taxon>
        <taxon>Metazoa</taxon>
        <taxon>Chordata</taxon>
        <taxon>Craniata</taxon>
        <taxon>Vertebrata</taxon>
        <taxon>Euteleostomi</taxon>
        <taxon>Amphibia</taxon>
        <taxon>Batrachia</taxon>
        <taxon>Anura</taxon>
        <taxon>Pipoidea</taxon>
        <taxon>Pipidae</taxon>
        <taxon>Xenopodinae</taxon>
        <taxon>Xenopus</taxon>
        <taxon>Silurana</taxon>
    </lineage>
</organism>
<proteinExistence type="evidence at transcript level"/>
<dbReference type="EMBL" id="CR848093">
    <property type="protein sequence ID" value="CAJ81539.1"/>
    <property type="molecule type" value="mRNA"/>
</dbReference>
<dbReference type="RefSeq" id="NP_001039179.1">
    <property type="nucleotide sequence ID" value="NM_001045714.1"/>
</dbReference>
<dbReference type="SMR" id="Q28ES4"/>
<dbReference type="STRING" id="8364.ENSXETP00000048936"/>
<dbReference type="GlyCosmos" id="Q28ES4">
    <property type="glycosylation" value="1 site, No reported glycans"/>
</dbReference>
<dbReference type="PaxDb" id="8364-ENSXETP00000045314"/>
<dbReference type="GeneID" id="734018"/>
<dbReference type="KEGG" id="xtr:734018"/>
<dbReference type="AGR" id="Xenbase:XB-GENE-5824718"/>
<dbReference type="CTD" id="734018"/>
<dbReference type="Xenbase" id="XB-GENE-5824718">
    <property type="gene designation" value="slc22a15.2"/>
</dbReference>
<dbReference type="eggNOG" id="KOG0255">
    <property type="taxonomic scope" value="Eukaryota"/>
</dbReference>
<dbReference type="InParanoid" id="Q28ES4"/>
<dbReference type="OMA" id="YVVATFC"/>
<dbReference type="OrthoDB" id="5296287at2759"/>
<dbReference type="Proteomes" id="UP000008143">
    <property type="component" value="Chromosome 7"/>
</dbReference>
<dbReference type="Bgee" id="ENSXETG00000020972">
    <property type="expression patterns" value="Expressed in heart and 14 other cell types or tissues"/>
</dbReference>
<dbReference type="GO" id="GO:0016020">
    <property type="term" value="C:membrane"/>
    <property type="evidence" value="ECO:0007669"/>
    <property type="project" value="UniProtKB-SubCell"/>
</dbReference>
<dbReference type="GO" id="GO:0022857">
    <property type="term" value="F:transmembrane transporter activity"/>
    <property type="evidence" value="ECO:0007669"/>
    <property type="project" value="InterPro"/>
</dbReference>
<dbReference type="GO" id="GO:0006811">
    <property type="term" value="P:monoatomic ion transport"/>
    <property type="evidence" value="ECO:0007669"/>
    <property type="project" value="UniProtKB-KW"/>
</dbReference>
<dbReference type="Gene3D" id="1.20.1250.20">
    <property type="entry name" value="MFS general substrate transporter like domains"/>
    <property type="match status" value="1"/>
</dbReference>
<dbReference type="InterPro" id="IPR020846">
    <property type="entry name" value="MFS_dom"/>
</dbReference>
<dbReference type="InterPro" id="IPR005828">
    <property type="entry name" value="MFS_sugar_transport-like"/>
</dbReference>
<dbReference type="InterPro" id="IPR036259">
    <property type="entry name" value="MFS_trans_sf"/>
</dbReference>
<dbReference type="PANTHER" id="PTHR24064">
    <property type="entry name" value="SOLUTE CARRIER FAMILY 22 MEMBER"/>
    <property type="match status" value="1"/>
</dbReference>
<dbReference type="Pfam" id="PF00083">
    <property type="entry name" value="Sugar_tr"/>
    <property type="match status" value="1"/>
</dbReference>
<dbReference type="SUPFAM" id="SSF103473">
    <property type="entry name" value="MFS general substrate transporter"/>
    <property type="match status" value="1"/>
</dbReference>
<dbReference type="PROSITE" id="PS50850">
    <property type="entry name" value="MFS"/>
    <property type="match status" value="1"/>
</dbReference>